<protein>
    <recommendedName>
        <fullName>Formate ester dehydrogenase beta chain</fullName>
        <shortName>FEDH</shortName>
        <ecNumber>1.2.99.-</ecNumber>
    </recommendedName>
</protein>
<organism>
    <name type="scientific">Amycolatopsis methanolica</name>
    <dbReference type="NCBI Taxonomy" id="1814"/>
    <lineage>
        <taxon>Bacteria</taxon>
        <taxon>Bacillati</taxon>
        <taxon>Actinomycetota</taxon>
        <taxon>Actinomycetes</taxon>
        <taxon>Pseudonocardiales</taxon>
        <taxon>Pseudonocardiaceae</taxon>
        <taxon>Amycolatopsis</taxon>
        <taxon>Amycolatopsis methanolica group</taxon>
    </lineage>
</organism>
<proteinExistence type="evidence at protein level"/>
<comment type="subunit">
    <text>Heterotrimer composed of an alpha, a beta and a gamma chain.</text>
</comment>
<dbReference type="EC" id="1.2.99.-"/>
<dbReference type="GO" id="GO:0016491">
    <property type="term" value="F:oxidoreductase activity"/>
    <property type="evidence" value="ECO:0007669"/>
    <property type="project" value="UniProtKB-KW"/>
</dbReference>
<dbReference type="Gene3D" id="3.30.43.10">
    <property type="entry name" value="Uridine Diphospho-n-acetylenolpyruvylglucosamine Reductase, domain 2"/>
    <property type="match status" value="1"/>
</dbReference>
<dbReference type="InterPro" id="IPR016167">
    <property type="entry name" value="FAD-bd_PCMH_sub1"/>
</dbReference>
<accession>P80706</accession>
<reference key="1">
    <citation type="journal article" date="1996" name="Arch. Biochem. Biophys.">
        <title>A second molybdoprotein aldehyde dehydrogenase from Amycolatopsis methanolica NCIB 11946.</title>
        <authorList>
            <person name="Kim S.W."/>
            <person name="Luykx D.M.A.M."/>
            <person name="de Vries S."/>
            <person name="Duine J.A."/>
        </authorList>
    </citation>
    <scope>PROTEIN SEQUENCE</scope>
    <source>
        <strain>DSM 44096 / JCM 8087 / NBRC 15065 / NCIMB 11946 / NRRL B-24139 / LMD 80.32 / 239</strain>
    </source>
</reference>
<keyword id="KW-0903">Direct protein sequencing</keyword>
<keyword id="KW-0560">Oxidoreductase</keyword>
<sequence>MIPAAFDYVAPSTVDEAVQAL</sequence>
<name>FEDB_AMYME</name>
<feature type="chain" id="PRO_0000063248" description="Formate ester dehydrogenase beta chain">
    <location>
        <begin position="1"/>
        <end position="21" status="greater than"/>
    </location>
</feature>
<feature type="non-terminal residue">
    <location>
        <position position="21"/>
    </location>
</feature>